<dbReference type="EC" id="6.3.5.5" evidence="1"/>
<dbReference type="EMBL" id="AE000657">
    <property type="protein sequence ID" value="AAC06674.1"/>
    <property type="molecule type" value="Genomic_DNA"/>
</dbReference>
<dbReference type="PIR" id="C70337">
    <property type="entry name" value="C70337"/>
</dbReference>
<dbReference type="RefSeq" id="NP_213287.1">
    <property type="nucleotide sequence ID" value="NC_000918.1"/>
</dbReference>
<dbReference type="RefSeq" id="WP_010880225.1">
    <property type="nucleotide sequence ID" value="NC_000918.1"/>
</dbReference>
<dbReference type="SMR" id="O66727"/>
<dbReference type="FunCoup" id="O66727">
    <property type="interactions" value="482"/>
</dbReference>
<dbReference type="STRING" id="224324.aq_410"/>
<dbReference type="EnsemblBacteria" id="AAC06674">
    <property type="protein sequence ID" value="AAC06674"/>
    <property type="gene ID" value="aq_410"/>
</dbReference>
<dbReference type="KEGG" id="aae:aq_410"/>
<dbReference type="PATRIC" id="fig|224324.8.peg.337"/>
<dbReference type="eggNOG" id="COG0505">
    <property type="taxonomic scope" value="Bacteria"/>
</dbReference>
<dbReference type="HOGENOM" id="CLU_035901_2_1_0"/>
<dbReference type="InParanoid" id="O66727"/>
<dbReference type="OrthoDB" id="9804328at2"/>
<dbReference type="UniPathway" id="UPA00068">
    <property type="reaction ID" value="UER00171"/>
</dbReference>
<dbReference type="UniPathway" id="UPA00070">
    <property type="reaction ID" value="UER00115"/>
</dbReference>
<dbReference type="Proteomes" id="UP000000798">
    <property type="component" value="Chromosome"/>
</dbReference>
<dbReference type="GO" id="GO:0005951">
    <property type="term" value="C:carbamoyl-phosphate synthase complex"/>
    <property type="evidence" value="ECO:0000318"/>
    <property type="project" value="GO_Central"/>
</dbReference>
<dbReference type="GO" id="GO:0005737">
    <property type="term" value="C:cytoplasm"/>
    <property type="evidence" value="ECO:0000318"/>
    <property type="project" value="GO_Central"/>
</dbReference>
<dbReference type="GO" id="GO:0005524">
    <property type="term" value="F:ATP binding"/>
    <property type="evidence" value="ECO:0007669"/>
    <property type="project" value="UniProtKB-UniRule"/>
</dbReference>
<dbReference type="GO" id="GO:0004088">
    <property type="term" value="F:carbamoyl-phosphate synthase (glutamine-hydrolyzing) activity"/>
    <property type="evidence" value="ECO:0007669"/>
    <property type="project" value="UniProtKB-UniRule"/>
</dbReference>
<dbReference type="GO" id="GO:0004359">
    <property type="term" value="F:glutaminase activity"/>
    <property type="evidence" value="ECO:0007669"/>
    <property type="project" value="RHEA"/>
</dbReference>
<dbReference type="GO" id="GO:0006207">
    <property type="term" value="P:'de novo' pyrimidine nucleobase biosynthetic process"/>
    <property type="evidence" value="ECO:0007669"/>
    <property type="project" value="InterPro"/>
</dbReference>
<dbReference type="GO" id="GO:0044205">
    <property type="term" value="P:'de novo' UMP biosynthetic process"/>
    <property type="evidence" value="ECO:0007669"/>
    <property type="project" value="UniProtKB-UniRule"/>
</dbReference>
<dbReference type="GO" id="GO:0006541">
    <property type="term" value="P:glutamine metabolic process"/>
    <property type="evidence" value="ECO:0007669"/>
    <property type="project" value="InterPro"/>
</dbReference>
<dbReference type="GO" id="GO:0006526">
    <property type="term" value="P:L-arginine biosynthetic process"/>
    <property type="evidence" value="ECO:0000318"/>
    <property type="project" value="GO_Central"/>
</dbReference>
<dbReference type="CDD" id="cd01744">
    <property type="entry name" value="GATase1_CPSase"/>
    <property type="match status" value="1"/>
</dbReference>
<dbReference type="FunFam" id="3.50.30.20:FF:000001">
    <property type="entry name" value="Carbamoyl-phosphate synthase small chain"/>
    <property type="match status" value="1"/>
</dbReference>
<dbReference type="Gene3D" id="3.40.50.880">
    <property type="match status" value="1"/>
</dbReference>
<dbReference type="Gene3D" id="3.50.30.20">
    <property type="entry name" value="Carbamoyl-phosphate synthase small subunit, N-terminal domain"/>
    <property type="match status" value="1"/>
</dbReference>
<dbReference type="HAMAP" id="MF_01209">
    <property type="entry name" value="CPSase_S_chain"/>
    <property type="match status" value="1"/>
</dbReference>
<dbReference type="InterPro" id="IPR050472">
    <property type="entry name" value="Anth_synth/Amidotransfase"/>
</dbReference>
<dbReference type="InterPro" id="IPR006274">
    <property type="entry name" value="CarbamoylP_synth_ssu"/>
</dbReference>
<dbReference type="InterPro" id="IPR002474">
    <property type="entry name" value="CarbamoylP_synth_ssu_N"/>
</dbReference>
<dbReference type="InterPro" id="IPR036480">
    <property type="entry name" value="CarbP_synth_ssu_N_sf"/>
</dbReference>
<dbReference type="InterPro" id="IPR029062">
    <property type="entry name" value="Class_I_gatase-like"/>
</dbReference>
<dbReference type="InterPro" id="IPR035686">
    <property type="entry name" value="CPSase_GATase1"/>
</dbReference>
<dbReference type="InterPro" id="IPR017926">
    <property type="entry name" value="GATASE"/>
</dbReference>
<dbReference type="NCBIfam" id="TIGR01368">
    <property type="entry name" value="CPSaseIIsmall"/>
    <property type="match status" value="1"/>
</dbReference>
<dbReference type="NCBIfam" id="NF009475">
    <property type="entry name" value="PRK12838.1"/>
    <property type="match status" value="1"/>
</dbReference>
<dbReference type="PANTHER" id="PTHR43418:SF7">
    <property type="entry name" value="CARBAMOYL-PHOSPHATE SYNTHASE SMALL CHAIN"/>
    <property type="match status" value="1"/>
</dbReference>
<dbReference type="PANTHER" id="PTHR43418">
    <property type="entry name" value="MULTIFUNCTIONAL TRYPTOPHAN BIOSYNTHESIS PROTEIN-RELATED"/>
    <property type="match status" value="1"/>
</dbReference>
<dbReference type="Pfam" id="PF00988">
    <property type="entry name" value="CPSase_sm_chain"/>
    <property type="match status" value="1"/>
</dbReference>
<dbReference type="Pfam" id="PF00117">
    <property type="entry name" value="GATase"/>
    <property type="match status" value="1"/>
</dbReference>
<dbReference type="PRINTS" id="PR00097">
    <property type="entry name" value="ANTSNTHASEII"/>
</dbReference>
<dbReference type="PRINTS" id="PR00099">
    <property type="entry name" value="CPSGATASE"/>
</dbReference>
<dbReference type="PRINTS" id="PR00096">
    <property type="entry name" value="GATASE"/>
</dbReference>
<dbReference type="SMART" id="SM01097">
    <property type="entry name" value="CPSase_sm_chain"/>
    <property type="match status" value="1"/>
</dbReference>
<dbReference type="SUPFAM" id="SSF52021">
    <property type="entry name" value="Carbamoyl phosphate synthetase, small subunit N-terminal domain"/>
    <property type="match status" value="1"/>
</dbReference>
<dbReference type="SUPFAM" id="SSF52317">
    <property type="entry name" value="Class I glutamine amidotransferase-like"/>
    <property type="match status" value="1"/>
</dbReference>
<dbReference type="PROSITE" id="PS51273">
    <property type="entry name" value="GATASE_TYPE_1"/>
    <property type="match status" value="1"/>
</dbReference>
<feature type="chain" id="PRO_0000112245" description="Carbamoyl phosphate synthase small chain">
    <location>
        <begin position="1"/>
        <end position="371"/>
    </location>
</feature>
<feature type="domain" description="Glutamine amidotransferase type-1" evidence="1">
    <location>
        <begin position="189"/>
        <end position="371"/>
    </location>
</feature>
<feature type="region of interest" description="CPSase" evidence="1">
    <location>
        <begin position="1"/>
        <end position="190"/>
    </location>
</feature>
<feature type="active site" description="Nucleophile" evidence="1">
    <location>
        <position position="264"/>
    </location>
</feature>
<feature type="active site" evidence="1">
    <location>
        <position position="348"/>
    </location>
</feature>
<feature type="active site" evidence="1">
    <location>
        <position position="350"/>
    </location>
</feature>
<feature type="binding site" evidence="1">
    <location>
        <position position="47"/>
    </location>
    <ligand>
        <name>L-glutamine</name>
        <dbReference type="ChEBI" id="CHEBI:58359"/>
    </ligand>
</feature>
<feature type="binding site" evidence="1">
    <location>
        <position position="237"/>
    </location>
    <ligand>
        <name>L-glutamine</name>
        <dbReference type="ChEBI" id="CHEBI:58359"/>
    </ligand>
</feature>
<feature type="binding site" evidence="1">
    <location>
        <position position="239"/>
    </location>
    <ligand>
        <name>L-glutamine</name>
        <dbReference type="ChEBI" id="CHEBI:58359"/>
    </ligand>
</feature>
<feature type="binding site" evidence="1">
    <location>
        <position position="265"/>
    </location>
    <ligand>
        <name>L-glutamine</name>
        <dbReference type="ChEBI" id="CHEBI:58359"/>
    </ligand>
</feature>
<feature type="binding site" evidence="1">
    <location>
        <position position="268"/>
    </location>
    <ligand>
        <name>L-glutamine</name>
        <dbReference type="ChEBI" id="CHEBI:58359"/>
    </ligand>
</feature>
<feature type="binding site" evidence="1">
    <location>
        <position position="306"/>
    </location>
    <ligand>
        <name>L-glutamine</name>
        <dbReference type="ChEBI" id="CHEBI:58359"/>
    </ligand>
</feature>
<feature type="binding site" evidence="1">
    <location>
        <position position="309"/>
    </location>
    <ligand>
        <name>L-glutamine</name>
        <dbReference type="ChEBI" id="CHEBI:58359"/>
    </ligand>
</feature>
<evidence type="ECO:0000255" key="1">
    <source>
        <dbReference type="HAMAP-Rule" id="MF_01209"/>
    </source>
</evidence>
<organism>
    <name type="scientific">Aquifex aeolicus (strain VF5)</name>
    <dbReference type="NCBI Taxonomy" id="224324"/>
    <lineage>
        <taxon>Bacteria</taxon>
        <taxon>Pseudomonadati</taxon>
        <taxon>Aquificota</taxon>
        <taxon>Aquificia</taxon>
        <taxon>Aquificales</taxon>
        <taxon>Aquificaceae</taxon>
        <taxon>Aquifex</taxon>
    </lineage>
</organism>
<reference key="1">
    <citation type="journal article" date="1998" name="Nature">
        <title>The complete genome of the hyperthermophilic bacterium Aquifex aeolicus.</title>
        <authorList>
            <person name="Deckert G."/>
            <person name="Warren P.V."/>
            <person name="Gaasterland T."/>
            <person name="Young W.G."/>
            <person name="Lenox A.L."/>
            <person name="Graham D.E."/>
            <person name="Overbeek R."/>
            <person name="Snead M.A."/>
            <person name="Keller M."/>
            <person name="Aujay M."/>
            <person name="Huber R."/>
            <person name="Feldman R.A."/>
            <person name="Short J.M."/>
            <person name="Olsen G.J."/>
            <person name="Swanson R.V."/>
        </authorList>
    </citation>
    <scope>NUCLEOTIDE SEQUENCE [LARGE SCALE GENOMIC DNA]</scope>
    <source>
        <strain>VF5</strain>
    </source>
</reference>
<gene>
    <name evidence="1" type="primary">carA</name>
    <name type="ordered locus">aq_410</name>
</gene>
<name>CARA_AQUAE</name>
<protein>
    <recommendedName>
        <fullName evidence="1">Carbamoyl phosphate synthase small chain</fullName>
        <ecNumber evidence="1">6.3.5.5</ecNumber>
    </recommendedName>
    <alternativeName>
        <fullName evidence="1">Carbamoyl phosphate synthetase glutamine chain</fullName>
    </alternativeName>
</protein>
<proteinExistence type="inferred from homology"/>
<accession>O66727</accession>
<sequence>MRKTAILALEDGSYFVGYSFGAEGETGGELVFNTSMTGYQEILTDPSYKGQIVVMTYTQIGNYGVNDEDIESKSVQVNGFVVKEAFFRYSNWRAKKSLDEYLKENNVVGIYGIDTRALVKKIREKGSMKGVISTVEKDPKKLVQKARELPDISEQNLVEEVSAKDIYYWNQGDYDPRRGFLYRENEKPLVAVIDFGVKFNILRRLVSEGAKVVVVPPENAKEAIEKINPDAIFLSNGPGDPERVISGIRLTREYMEKKPIMGICLGCQIIGLALGGKTYKLKFGHHGGNHPVKDLRTGKIEITAQNHNFAIDPESLPEDVEVTHLNLLDNTVEGIKHKHLPIFAVQYHPENSPGPHDSYYLFKEFVKMAQG</sequence>
<keyword id="KW-0028">Amino-acid biosynthesis</keyword>
<keyword id="KW-0055">Arginine biosynthesis</keyword>
<keyword id="KW-0067">ATP-binding</keyword>
<keyword id="KW-0315">Glutamine amidotransferase</keyword>
<keyword id="KW-0436">Ligase</keyword>
<keyword id="KW-0547">Nucleotide-binding</keyword>
<keyword id="KW-0665">Pyrimidine biosynthesis</keyword>
<keyword id="KW-1185">Reference proteome</keyword>
<comment type="function">
    <text evidence="1">Small subunit of the glutamine-dependent carbamoyl phosphate synthetase (CPSase). CPSase catalyzes the formation of carbamoyl phosphate from the ammonia moiety of glutamine, carbonate, and phosphate donated by ATP, constituting the first step of 2 biosynthetic pathways, one leading to arginine and/or urea and the other to pyrimidine nucleotides. The small subunit (glutamine amidotransferase) binds and cleaves glutamine to supply the large subunit with the substrate ammonia.</text>
</comment>
<comment type="catalytic activity">
    <reaction evidence="1">
        <text>hydrogencarbonate + L-glutamine + 2 ATP + H2O = carbamoyl phosphate + L-glutamate + 2 ADP + phosphate + 2 H(+)</text>
        <dbReference type="Rhea" id="RHEA:18633"/>
        <dbReference type="ChEBI" id="CHEBI:15377"/>
        <dbReference type="ChEBI" id="CHEBI:15378"/>
        <dbReference type="ChEBI" id="CHEBI:17544"/>
        <dbReference type="ChEBI" id="CHEBI:29985"/>
        <dbReference type="ChEBI" id="CHEBI:30616"/>
        <dbReference type="ChEBI" id="CHEBI:43474"/>
        <dbReference type="ChEBI" id="CHEBI:58228"/>
        <dbReference type="ChEBI" id="CHEBI:58359"/>
        <dbReference type="ChEBI" id="CHEBI:456216"/>
        <dbReference type="EC" id="6.3.5.5"/>
    </reaction>
</comment>
<comment type="catalytic activity">
    <molecule>Carbamoyl phosphate synthase small chain</molecule>
    <reaction evidence="1">
        <text>L-glutamine + H2O = L-glutamate + NH4(+)</text>
        <dbReference type="Rhea" id="RHEA:15889"/>
        <dbReference type="ChEBI" id="CHEBI:15377"/>
        <dbReference type="ChEBI" id="CHEBI:28938"/>
        <dbReference type="ChEBI" id="CHEBI:29985"/>
        <dbReference type="ChEBI" id="CHEBI:58359"/>
    </reaction>
</comment>
<comment type="pathway">
    <text evidence="1">Amino-acid biosynthesis; L-arginine biosynthesis; carbamoyl phosphate from bicarbonate: step 1/1.</text>
</comment>
<comment type="pathway">
    <text evidence="1">Pyrimidine metabolism; UMP biosynthesis via de novo pathway; (S)-dihydroorotate from bicarbonate: step 1/3.</text>
</comment>
<comment type="subunit">
    <text evidence="1">Composed of two chains; the small (or glutamine) chain promotes the hydrolysis of glutamine to ammonia, which is used by the large (or ammonia) chain to synthesize carbamoyl phosphate. Tetramer of heterodimers (alpha,beta)4.</text>
</comment>
<comment type="similarity">
    <text evidence="1">Belongs to the CarA family.</text>
</comment>